<accession>B1XIF6</accession>
<sequence length="350" mass="39050">MSESNNTPLLLRAARGEKVERTPVWMMRQAGRYMKIYRDLREKYPSFRERSENPDLAIEISLQPWHAFQPDGVIMFSDILTPLPGMGIPFDIIESKGPIIENPIRTQAQVDAMTPFDPAESLPFIKTILGTLRQEVGNASTVLGFVGAPWTLAAYAIEGKSSKNYAIIKNMAFSEPAVLHSFLGKIADAIADYVCYQIECGAQVIQMFDSWAGQLSPQDYDMFALPYQKRVVDKVKAKYPDFPLILYISGSAGVLERMGKSGVDIVSVDWTVDMADARQRLGKDMKVQGNIDPGVLFGSQDFIKARIIDTVRKAGNWGHILNLGHGVLVGTPEDNVRFFFETCKNVQSFL</sequence>
<comment type="function">
    <text evidence="1">Catalyzes the decarboxylation of four acetate groups of uroporphyrinogen-III to yield coproporphyrinogen-III.</text>
</comment>
<comment type="catalytic activity">
    <reaction evidence="1">
        <text>uroporphyrinogen III + 4 H(+) = coproporphyrinogen III + 4 CO2</text>
        <dbReference type="Rhea" id="RHEA:19865"/>
        <dbReference type="ChEBI" id="CHEBI:15378"/>
        <dbReference type="ChEBI" id="CHEBI:16526"/>
        <dbReference type="ChEBI" id="CHEBI:57308"/>
        <dbReference type="ChEBI" id="CHEBI:57309"/>
        <dbReference type="EC" id="4.1.1.37"/>
    </reaction>
</comment>
<comment type="pathway">
    <text evidence="1">Porphyrin-containing compound metabolism; protoporphyrin-IX biosynthesis; coproporphyrinogen-III from 5-aminolevulinate: step 4/4.</text>
</comment>
<comment type="subunit">
    <text evidence="1">Homodimer.</text>
</comment>
<comment type="subcellular location">
    <subcellularLocation>
        <location evidence="1">Cytoplasm</location>
    </subcellularLocation>
</comment>
<comment type="similarity">
    <text evidence="1">Belongs to the uroporphyrinogen decarboxylase family.</text>
</comment>
<dbReference type="EC" id="4.1.1.37" evidence="1"/>
<dbReference type="EMBL" id="CP000951">
    <property type="protein sequence ID" value="ACA98827.1"/>
    <property type="molecule type" value="Genomic_DNA"/>
</dbReference>
<dbReference type="RefSeq" id="WP_012306451.1">
    <property type="nucleotide sequence ID" value="NZ_JAHHPU010000001.1"/>
</dbReference>
<dbReference type="SMR" id="B1XIF6"/>
<dbReference type="STRING" id="32049.SYNPCC7002_A0823"/>
<dbReference type="KEGG" id="syp:SYNPCC7002_A0823"/>
<dbReference type="eggNOG" id="COG0407">
    <property type="taxonomic scope" value="Bacteria"/>
</dbReference>
<dbReference type="HOGENOM" id="CLU_040933_0_2_3"/>
<dbReference type="UniPathway" id="UPA00251">
    <property type="reaction ID" value="UER00321"/>
</dbReference>
<dbReference type="Proteomes" id="UP000001688">
    <property type="component" value="Chromosome"/>
</dbReference>
<dbReference type="GO" id="GO:0005737">
    <property type="term" value="C:cytoplasm"/>
    <property type="evidence" value="ECO:0007669"/>
    <property type="project" value="UniProtKB-SubCell"/>
</dbReference>
<dbReference type="GO" id="GO:0004853">
    <property type="term" value="F:uroporphyrinogen decarboxylase activity"/>
    <property type="evidence" value="ECO:0007669"/>
    <property type="project" value="UniProtKB-UniRule"/>
</dbReference>
<dbReference type="GO" id="GO:0006782">
    <property type="term" value="P:protoporphyrinogen IX biosynthetic process"/>
    <property type="evidence" value="ECO:0007669"/>
    <property type="project" value="UniProtKB-UniRule"/>
</dbReference>
<dbReference type="CDD" id="cd00717">
    <property type="entry name" value="URO-D"/>
    <property type="match status" value="1"/>
</dbReference>
<dbReference type="FunFam" id="3.20.20.210:FF:000006">
    <property type="entry name" value="Uroporphyrinogen decarboxylase"/>
    <property type="match status" value="1"/>
</dbReference>
<dbReference type="Gene3D" id="3.20.20.210">
    <property type="match status" value="1"/>
</dbReference>
<dbReference type="HAMAP" id="MF_00218">
    <property type="entry name" value="URO_D"/>
    <property type="match status" value="1"/>
</dbReference>
<dbReference type="InterPro" id="IPR038071">
    <property type="entry name" value="UROD/MetE-like_sf"/>
</dbReference>
<dbReference type="InterPro" id="IPR006361">
    <property type="entry name" value="Uroporphyrinogen_deCO2ase_HemE"/>
</dbReference>
<dbReference type="InterPro" id="IPR000257">
    <property type="entry name" value="Uroporphyrinogen_deCOase"/>
</dbReference>
<dbReference type="NCBIfam" id="TIGR01464">
    <property type="entry name" value="hemE"/>
    <property type="match status" value="1"/>
</dbReference>
<dbReference type="PANTHER" id="PTHR21091">
    <property type="entry name" value="METHYLTETRAHYDROFOLATE:HOMOCYSTEINE METHYLTRANSFERASE RELATED"/>
    <property type="match status" value="1"/>
</dbReference>
<dbReference type="PANTHER" id="PTHR21091:SF169">
    <property type="entry name" value="UROPORPHYRINOGEN DECARBOXYLASE"/>
    <property type="match status" value="1"/>
</dbReference>
<dbReference type="Pfam" id="PF01208">
    <property type="entry name" value="URO-D"/>
    <property type="match status" value="1"/>
</dbReference>
<dbReference type="SUPFAM" id="SSF51726">
    <property type="entry name" value="UROD/MetE-like"/>
    <property type="match status" value="1"/>
</dbReference>
<dbReference type="PROSITE" id="PS00906">
    <property type="entry name" value="UROD_1"/>
    <property type="match status" value="1"/>
</dbReference>
<dbReference type="PROSITE" id="PS00907">
    <property type="entry name" value="UROD_2"/>
    <property type="match status" value="1"/>
</dbReference>
<protein>
    <recommendedName>
        <fullName evidence="1">Uroporphyrinogen decarboxylase</fullName>
        <shortName evidence="1">UPD</shortName>
        <shortName evidence="1">URO-D</shortName>
        <ecNumber evidence="1">4.1.1.37</ecNumber>
    </recommendedName>
</protein>
<keyword id="KW-0963">Cytoplasm</keyword>
<keyword id="KW-0210">Decarboxylase</keyword>
<keyword id="KW-0456">Lyase</keyword>
<keyword id="KW-0627">Porphyrin biosynthesis</keyword>
<keyword id="KW-1185">Reference proteome</keyword>
<name>DCUP_PICP2</name>
<gene>
    <name evidence="1" type="primary">hemE</name>
    <name type="ordered locus">SYNPCC7002_A0823</name>
</gene>
<reference key="1">
    <citation type="submission" date="2008-02" db="EMBL/GenBank/DDBJ databases">
        <title>Complete sequence of Synechococcus sp. PCC 7002.</title>
        <authorList>
            <person name="Li T."/>
            <person name="Zhao J."/>
            <person name="Zhao C."/>
            <person name="Liu Z."/>
            <person name="Zhao F."/>
            <person name="Marquardt J."/>
            <person name="Nomura C.T."/>
            <person name="Persson S."/>
            <person name="Detter J.C."/>
            <person name="Richardson P.M."/>
            <person name="Lanz C."/>
            <person name="Schuster S.C."/>
            <person name="Wang J."/>
            <person name="Li S."/>
            <person name="Huang X."/>
            <person name="Cai T."/>
            <person name="Yu Z."/>
            <person name="Luo J."/>
            <person name="Zhao J."/>
            <person name="Bryant D.A."/>
        </authorList>
    </citation>
    <scope>NUCLEOTIDE SEQUENCE [LARGE SCALE GENOMIC DNA]</scope>
    <source>
        <strain>ATCC 27264 / PCC 7002 / PR-6</strain>
    </source>
</reference>
<feature type="chain" id="PRO_1000100021" description="Uroporphyrinogen decarboxylase">
    <location>
        <begin position="1"/>
        <end position="350"/>
    </location>
</feature>
<feature type="binding site" evidence="1">
    <location>
        <begin position="28"/>
        <end position="32"/>
    </location>
    <ligand>
        <name>substrate</name>
    </ligand>
</feature>
<feature type="binding site" evidence="1">
    <location>
        <position position="78"/>
    </location>
    <ligand>
        <name>substrate</name>
    </ligand>
</feature>
<feature type="binding site" evidence="1">
    <location>
        <position position="155"/>
    </location>
    <ligand>
        <name>substrate</name>
    </ligand>
</feature>
<feature type="binding site" evidence="1">
    <location>
        <position position="210"/>
    </location>
    <ligand>
        <name>substrate</name>
    </ligand>
</feature>
<feature type="binding site" evidence="1">
    <location>
        <position position="325"/>
    </location>
    <ligand>
        <name>substrate</name>
    </ligand>
</feature>
<feature type="site" description="Transition state stabilizer" evidence="1">
    <location>
        <position position="78"/>
    </location>
</feature>
<evidence type="ECO:0000255" key="1">
    <source>
        <dbReference type="HAMAP-Rule" id="MF_00218"/>
    </source>
</evidence>
<organism>
    <name type="scientific">Picosynechococcus sp. (strain ATCC 27264 / PCC 7002 / PR-6)</name>
    <name type="common">Agmenellum quadruplicatum</name>
    <dbReference type="NCBI Taxonomy" id="32049"/>
    <lineage>
        <taxon>Bacteria</taxon>
        <taxon>Bacillati</taxon>
        <taxon>Cyanobacteriota</taxon>
        <taxon>Cyanophyceae</taxon>
        <taxon>Oscillatoriophycideae</taxon>
        <taxon>Chroococcales</taxon>
        <taxon>Geminocystaceae</taxon>
        <taxon>Picosynechococcus</taxon>
    </lineage>
</organism>
<proteinExistence type="inferred from homology"/>